<gene>
    <name evidence="1" type="primary">dsbD</name>
    <name type="ordered locus">CKO_03700</name>
</gene>
<sequence length="569" mass="61756">MAQRILTLILLLCSTSAFAGLFDAPGRSQFVPADQAFSFDFQQNQHDLNLSWQVKDGYYLYRKQISITPSQAEIAEVRLPAGVWHEDEFYGKSEIYRKRLNIPLIVNQAASGATLTVTYQGCADAGFCYPPETKTVPLSEVSASTVAKSTPSPVAAQTEETPQPAARLPFSALWALLIGIGIAFTPCVLPMYPLISGIVLGGKQRLSTGRALLLTFIYVQGMALTYTALGLVVAAAGLQFQAALQHPYVLIGLALVFTLLALSMFGLFTLQLPSSLQTRLTLMSNRQQGGSPGGVFVMGAIAGLICSPCTTAPLSAILLYIAQSGNMWLGGGTLYLYALGMGLPLILITVFGNRLLPKSGPWMEHVKTAFGFVILALPVFLLERVIGDEWGLRLWSLLGVAFFGWAFITSLHARRSGMRIVQIILLAAALVSVRPLQDWAFGATTAQTQAHLNFKPITTVDALNQALAEAKGKPIMLDLYADWCVACKEFEKYTFSDPQVQQTLGDTVLLQANVTANNAQDVALLRHLNVLGLPTILFFDAQGHEHPNARVTGFMDATTFSAHLRDRQP</sequence>
<reference key="1">
    <citation type="submission" date="2007-08" db="EMBL/GenBank/DDBJ databases">
        <authorList>
            <consortium name="The Citrobacter koseri Genome Sequencing Project"/>
            <person name="McClelland M."/>
            <person name="Sanderson E.K."/>
            <person name="Porwollik S."/>
            <person name="Spieth J."/>
            <person name="Clifton W.S."/>
            <person name="Latreille P."/>
            <person name="Courtney L."/>
            <person name="Wang C."/>
            <person name="Pepin K."/>
            <person name="Bhonagiri V."/>
            <person name="Nash W."/>
            <person name="Johnson M."/>
            <person name="Thiruvilangam P."/>
            <person name="Wilson R."/>
        </authorList>
    </citation>
    <scope>NUCLEOTIDE SEQUENCE [LARGE SCALE GENOMIC DNA]</scope>
    <source>
        <strain>ATCC BAA-895 / CDC 4225-83 / SGSC4696</strain>
    </source>
</reference>
<evidence type="ECO:0000255" key="1">
    <source>
        <dbReference type="HAMAP-Rule" id="MF_00399"/>
    </source>
</evidence>
<keyword id="KW-0997">Cell inner membrane</keyword>
<keyword id="KW-1003">Cell membrane</keyword>
<keyword id="KW-0201">Cytochrome c-type biogenesis</keyword>
<keyword id="KW-1015">Disulfide bond</keyword>
<keyword id="KW-0249">Electron transport</keyword>
<keyword id="KW-0472">Membrane</keyword>
<keyword id="KW-0520">NAD</keyword>
<keyword id="KW-0560">Oxidoreductase</keyword>
<keyword id="KW-0676">Redox-active center</keyword>
<keyword id="KW-1185">Reference proteome</keyword>
<keyword id="KW-0732">Signal</keyword>
<keyword id="KW-0812">Transmembrane</keyword>
<keyword id="KW-1133">Transmembrane helix</keyword>
<keyword id="KW-0813">Transport</keyword>
<comment type="function">
    <text evidence="1">Required to facilitate the formation of correct disulfide bonds in some periplasmic proteins and for the assembly of the periplasmic c-type cytochromes. Acts by transferring electrons from cytoplasmic thioredoxin to the periplasm. This transfer involves a cascade of disulfide bond formation and reduction steps.</text>
</comment>
<comment type="catalytic activity">
    <reaction evidence="1">
        <text>[protein]-dithiol + NAD(+) = [protein]-disulfide + NADH + H(+)</text>
        <dbReference type="Rhea" id="RHEA:18749"/>
        <dbReference type="Rhea" id="RHEA-COMP:10593"/>
        <dbReference type="Rhea" id="RHEA-COMP:10594"/>
        <dbReference type="ChEBI" id="CHEBI:15378"/>
        <dbReference type="ChEBI" id="CHEBI:29950"/>
        <dbReference type="ChEBI" id="CHEBI:50058"/>
        <dbReference type="ChEBI" id="CHEBI:57540"/>
        <dbReference type="ChEBI" id="CHEBI:57945"/>
        <dbReference type="EC" id="1.8.1.8"/>
    </reaction>
</comment>
<comment type="catalytic activity">
    <reaction evidence="1">
        <text>[protein]-dithiol + NADP(+) = [protein]-disulfide + NADPH + H(+)</text>
        <dbReference type="Rhea" id="RHEA:18753"/>
        <dbReference type="Rhea" id="RHEA-COMP:10593"/>
        <dbReference type="Rhea" id="RHEA-COMP:10594"/>
        <dbReference type="ChEBI" id="CHEBI:15378"/>
        <dbReference type="ChEBI" id="CHEBI:29950"/>
        <dbReference type="ChEBI" id="CHEBI:50058"/>
        <dbReference type="ChEBI" id="CHEBI:57783"/>
        <dbReference type="ChEBI" id="CHEBI:58349"/>
        <dbReference type="EC" id="1.8.1.8"/>
    </reaction>
</comment>
<comment type="subcellular location">
    <subcellularLocation>
        <location evidence="1">Cell inner membrane</location>
        <topology evidence="1">Multi-pass membrane protein</topology>
    </subcellularLocation>
</comment>
<comment type="similarity">
    <text evidence="1">Belongs to the thioredoxin family. DsbD subfamily.</text>
</comment>
<accession>A8AMR4</accession>
<proteinExistence type="inferred from homology"/>
<organism>
    <name type="scientific">Citrobacter koseri (strain ATCC BAA-895 / CDC 4225-83 / SGSC4696)</name>
    <dbReference type="NCBI Taxonomy" id="290338"/>
    <lineage>
        <taxon>Bacteria</taxon>
        <taxon>Pseudomonadati</taxon>
        <taxon>Pseudomonadota</taxon>
        <taxon>Gammaproteobacteria</taxon>
        <taxon>Enterobacterales</taxon>
        <taxon>Enterobacteriaceae</taxon>
        <taxon>Citrobacter</taxon>
    </lineage>
</organism>
<name>DSBD_CITK8</name>
<feature type="signal peptide" evidence="1">
    <location>
        <begin position="1"/>
        <end position="19"/>
    </location>
</feature>
<feature type="chain" id="PRO_1000049607" description="Thiol:disulfide interchange protein DsbD">
    <location>
        <begin position="20"/>
        <end position="569"/>
    </location>
</feature>
<feature type="transmembrane region" description="Helical" evidence="1">
    <location>
        <begin position="168"/>
        <end position="188"/>
    </location>
</feature>
<feature type="transmembrane region" description="Helical" evidence="1">
    <location>
        <begin position="213"/>
        <end position="233"/>
    </location>
</feature>
<feature type="transmembrane region" description="Helical" evidence="1">
    <location>
        <begin position="248"/>
        <end position="268"/>
    </location>
</feature>
<feature type="transmembrane region" description="Helical" evidence="1">
    <location>
        <begin position="301"/>
        <end position="321"/>
    </location>
</feature>
<feature type="transmembrane region" description="Helical" evidence="1">
    <location>
        <begin position="328"/>
        <end position="348"/>
    </location>
</feature>
<feature type="transmembrane region" description="Helical" evidence="1">
    <location>
        <begin position="362"/>
        <end position="382"/>
    </location>
</feature>
<feature type="transmembrane region" description="Helical" evidence="1">
    <location>
        <begin position="391"/>
        <end position="411"/>
    </location>
</feature>
<feature type="domain" description="Thioredoxin" evidence="1">
    <location>
        <begin position="430"/>
        <end position="569"/>
    </location>
</feature>
<feature type="disulfide bond" description="Redox-active" evidence="1">
    <location>
        <begin position="122"/>
        <end position="128"/>
    </location>
</feature>
<feature type="disulfide bond" description="Redox-active" evidence="1">
    <location>
        <begin position="187"/>
        <end position="309"/>
    </location>
</feature>
<feature type="disulfide bond" description="Redox-active" evidence="1">
    <location>
        <begin position="484"/>
        <end position="487"/>
    </location>
</feature>
<dbReference type="EC" id="1.8.1.8" evidence="1"/>
<dbReference type="EMBL" id="CP000822">
    <property type="protein sequence ID" value="ABV14777.1"/>
    <property type="molecule type" value="Genomic_DNA"/>
</dbReference>
<dbReference type="RefSeq" id="WP_012134474.1">
    <property type="nucleotide sequence ID" value="NC_009792.1"/>
</dbReference>
<dbReference type="SMR" id="A8AMR4"/>
<dbReference type="STRING" id="290338.CKO_03700"/>
<dbReference type="GeneID" id="45137402"/>
<dbReference type="KEGG" id="cko:CKO_03700"/>
<dbReference type="HOGENOM" id="CLU_014657_3_0_6"/>
<dbReference type="OrthoDB" id="9811036at2"/>
<dbReference type="Proteomes" id="UP000008148">
    <property type="component" value="Chromosome"/>
</dbReference>
<dbReference type="GO" id="GO:0005886">
    <property type="term" value="C:plasma membrane"/>
    <property type="evidence" value="ECO:0007669"/>
    <property type="project" value="UniProtKB-SubCell"/>
</dbReference>
<dbReference type="GO" id="GO:0009055">
    <property type="term" value="F:electron transfer activity"/>
    <property type="evidence" value="ECO:0007669"/>
    <property type="project" value="UniProtKB-UniRule"/>
</dbReference>
<dbReference type="GO" id="GO:0047134">
    <property type="term" value="F:protein-disulfide reductase [NAD(P)H] activity"/>
    <property type="evidence" value="ECO:0007669"/>
    <property type="project" value="UniProtKB-UniRule"/>
</dbReference>
<dbReference type="GO" id="GO:0045454">
    <property type="term" value="P:cell redox homeostasis"/>
    <property type="evidence" value="ECO:0007669"/>
    <property type="project" value="TreeGrafter"/>
</dbReference>
<dbReference type="GO" id="GO:0017004">
    <property type="term" value="P:cytochrome complex assembly"/>
    <property type="evidence" value="ECO:0007669"/>
    <property type="project" value="UniProtKB-UniRule"/>
</dbReference>
<dbReference type="CDD" id="cd02953">
    <property type="entry name" value="DsbDgamma"/>
    <property type="match status" value="1"/>
</dbReference>
<dbReference type="FunFam" id="2.60.40.1250:FF:000001">
    <property type="entry name" value="Thiol:disulfide interchange protein DsbD"/>
    <property type="match status" value="1"/>
</dbReference>
<dbReference type="FunFam" id="3.40.30.10:FF:000116">
    <property type="entry name" value="Thiol:disulfide interchange protein DsbD"/>
    <property type="match status" value="1"/>
</dbReference>
<dbReference type="Gene3D" id="3.40.30.10">
    <property type="entry name" value="Glutaredoxin"/>
    <property type="match status" value="1"/>
</dbReference>
<dbReference type="Gene3D" id="2.60.40.1250">
    <property type="entry name" value="Thiol:disulfide interchange protein DsbD, N-terminal domain"/>
    <property type="match status" value="1"/>
</dbReference>
<dbReference type="HAMAP" id="MF_00399">
    <property type="entry name" value="DbsD"/>
    <property type="match status" value="1"/>
</dbReference>
<dbReference type="InterPro" id="IPR003834">
    <property type="entry name" value="Cyt_c_assmbl_TM_dom"/>
</dbReference>
<dbReference type="InterPro" id="IPR035671">
    <property type="entry name" value="DsbD_gamma"/>
</dbReference>
<dbReference type="InterPro" id="IPR028250">
    <property type="entry name" value="DsbDN"/>
</dbReference>
<dbReference type="InterPro" id="IPR036929">
    <property type="entry name" value="DsbDN_sf"/>
</dbReference>
<dbReference type="InterPro" id="IPR022910">
    <property type="entry name" value="Thiol_diS_interchange_DbsD"/>
</dbReference>
<dbReference type="InterPro" id="IPR036249">
    <property type="entry name" value="Thioredoxin-like_sf"/>
</dbReference>
<dbReference type="InterPro" id="IPR017937">
    <property type="entry name" value="Thioredoxin_CS"/>
</dbReference>
<dbReference type="InterPro" id="IPR013766">
    <property type="entry name" value="Thioredoxin_domain"/>
</dbReference>
<dbReference type="NCBIfam" id="NF001419">
    <property type="entry name" value="PRK00293.1"/>
    <property type="match status" value="1"/>
</dbReference>
<dbReference type="PANTHER" id="PTHR32234">
    <property type="entry name" value="THIOL:DISULFIDE INTERCHANGE PROTEIN DSBD"/>
    <property type="match status" value="1"/>
</dbReference>
<dbReference type="PANTHER" id="PTHR32234:SF0">
    <property type="entry name" value="THIOL:DISULFIDE INTERCHANGE PROTEIN DSBD"/>
    <property type="match status" value="1"/>
</dbReference>
<dbReference type="Pfam" id="PF11412">
    <property type="entry name" value="DsbD_N"/>
    <property type="match status" value="1"/>
</dbReference>
<dbReference type="Pfam" id="PF02683">
    <property type="entry name" value="DsbD_TM"/>
    <property type="match status" value="1"/>
</dbReference>
<dbReference type="Pfam" id="PF13899">
    <property type="entry name" value="Thioredoxin_7"/>
    <property type="match status" value="1"/>
</dbReference>
<dbReference type="SUPFAM" id="SSF74863">
    <property type="entry name" value="Thiol:disulfide interchange protein DsbD, N-terminal domain (DsbD-alpha)"/>
    <property type="match status" value="1"/>
</dbReference>
<dbReference type="SUPFAM" id="SSF52833">
    <property type="entry name" value="Thioredoxin-like"/>
    <property type="match status" value="1"/>
</dbReference>
<dbReference type="PROSITE" id="PS00194">
    <property type="entry name" value="THIOREDOXIN_1"/>
    <property type="match status" value="1"/>
</dbReference>
<dbReference type="PROSITE" id="PS51352">
    <property type="entry name" value="THIOREDOXIN_2"/>
    <property type="match status" value="1"/>
</dbReference>
<protein>
    <recommendedName>
        <fullName evidence="1">Thiol:disulfide interchange protein DsbD</fullName>
        <ecNumber evidence="1">1.8.1.8</ecNumber>
    </recommendedName>
    <alternativeName>
        <fullName evidence="1">Protein-disulfide reductase</fullName>
        <shortName evidence="1">Disulfide reductase</shortName>
    </alternativeName>
</protein>